<accession>A4YH82</accession>
<reference key="1">
    <citation type="journal article" date="2008" name="Appl. Environ. Microbiol.">
        <title>The genome sequence of the metal-mobilizing, extremely thermoacidophilic archaeon Metallosphaera sedula provides insights into bioleaching-associated metabolism.</title>
        <authorList>
            <person name="Auernik K.S."/>
            <person name="Maezato Y."/>
            <person name="Blum P.H."/>
            <person name="Kelly R.M."/>
        </authorList>
    </citation>
    <scope>NUCLEOTIDE SEQUENCE [LARGE SCALE GENOMIC DNA]</scope>
    <source>
        <strain>ATCC 51363 / DSM 5348 / JCM 9185 / NBRC 15509 / TH2</strain>
    </source>
</reference>
<name>RL18A_METS5</name>
<gene>
    <name evidence="1" type="primary">rpl18a</name>
    <name evidence="1" type="synonym">rpl20e</name>
    <name evidence="1" type="synonym">rplX</name>
    <name type="ordered locus">Msed_1629</name>
</gene>
<keyword id="KW-1185">Reference proteome</keyword>
<keyword id="KW-0687">Ribonucleoprotein</keyword>
<keyword id="KW-0689">Ribosomal protein</keyword>
<keyword id="KW-0694">RNA-binding</keyword>
<keyword id="KW-0699">rRNA-binding</keyword>
<feature type="chain" id="PRO_1000071908" description="Large ribosomal subunit protein eL20">
    <location>
        <begin position="1"/>
        <end position="86"/>
    </location>
</feature>
<organism>
    <name type="scientific">Metallosphaera sedula (strain ATCC 51363 / DSM 5348 / JCM 9185 / NBRC 15509 / TH2)</name>
    <dbReference type="NCBI Taxonomy" id="399549"/>
    <lineage>
        <taxon>Archaea</taxon>
        <taxon>Thermoproteota</taxon>
        <taxon>Thermoprotei</taxon>
        <taxon>Sulfolobales</taxon>
        <taxon>Sulfolobaceae</taxon>
        <taxon>Metallosphaera</taxon>
    </lineage>
</organism>
<dbReference type="EMBL" id="CP000682">
    <property type="protein sequence ID" value="ABP95784.1"/>
    <property type="molecule type" value="Genomic_DNA"/>
</dbReference>
<dbReference type="RefSeq" id="WP_012021571.1">
    <property type="nucleotide sequence ID" value="NC_009440.1"/>
</dbReference>
<dbReference type="SMR" id="A4YH82"/>
<dbReference type="STRING" id="399549.Msed_1629"/>
<dbReference type="GeneID" id="91756136"/>
<dbReference type="KEGG" id="mse:Msed_1629"/>
<dbReference type="eggNOG" id="arCOG04175">
    <property type="taxonomic scope" value="Archaea"/>
</dbReference>
<dbReference type="HOGENOM" id="CLU_177460_0_0_2"/>
<dbReference type="Proteomes" id="UP000000242">
    <property type="component" value="Chromosome"/>
</dbReference>
<dbReference type="GO" id="GO:1990904">
    <property type="term" value="C:ribonucleoprotein complex"/>
    <property type="evidence" value="ECO:0007669"/>
    <property type="project" value="UniProtKB-KW"/>
</dbReference>
<dbReference type="GO" id="GO:0005840">
    <property type="term" value="C:ribosome"/>
    <property type="evidence" value="ECO:0007669"/>
    <property type="project" value="UniProtKB-KW"/>
</dbReference>
<dbReference type="GO" id="GO:0070180">
    <property type="term" value="F:large ribosomal subunit rRNA binding"/>
    <property type="evidence" value="ECO:0007669"/>
    <property type="project" value="UniProtKB-UniRule"/>
</dbReference>
<dbReference type="GO" id="GO:0003735">
    <property type="term" value="F:structural constituent of ribosome"/>
    <property type="evidence" value="ECO:0007669"/>
    <property type="project" value="InterPro"/>
</dbReference>
<dbReference type="GO" id="GO:0006412">
    <property type="term" value="P:translation"/>
    <property type="evidence" value="ECO:0007669"/>
    <property type="project" value="UniProtKB-UniRule"/>
</dbReference>
<dbReference type="Gene3D" id="3.10.20.10">
    <property type="match status" value="1"/>
</dbReference>
<dbReference type="HAMAP" id="MF_00273">
    <property type="entry name" value="Ribosomal_eL20"/>
    <property type="match status" value="1"/>
</dbReference>
<dbReference type="InterPro" id="IPR028877">
    <property type="entry name" value="Ribosomal_eL20"/>
</dbReference>
<dbReference type="InterPro" id="IPR023573">
    <property type="entry name" value="Ribosomal_eL20_dom"/>
</dbReference>
<dbReference type="NCBIfam" id="NF001981">
    <property type="entry name" value="PRK00773.1-1"/>
    <property type="match status" value="1"/>
</dbReference>
<dbReference type="Pfam" id="PF01775">
    <property type="entry name" value="Ribosomal_L18A"/>
    <property type="match status" value="1"/>
</dbReference>
<dbReference type="SUPFAM" id="SSF160374">
    <property type="entry name" value="RplX-like"/>
    <property type="match status" value="1"/>
</dbReference>
<comment type="subunit">
    <text evidence="1">Part of the 50S ribosomal subunit. Binds 23S rRNA.</text>
</comment>
<comment type="similarity">
    <text evidence="1">Belongs to the eukaryotic ribosomal protein eL20 family.</text>
</comment>
<evidence type="ECO:0000255" key="1">
    <source>
        <dbReference type="HAMAP-Rule" id="MF_00273"/>
    </source>
</evidence>
<evidence type="ECO:0000305" key="2"/>
<sequence length="86" mass="10097">MTEVKTFMVKGAALFNESEFPVRQSFTKYVRALNEEQAKEKVYMDLGSKNKIKRRNITFLEIKEVDPSTVKEKRIKELSKIDKIIL</sequence>
<proteinExistence type="inferred from homology"/>
<protein>
    <recommendedName>
        <fullName evidence="1">Large ribosomal subunit protein eL20</fullName>
    </recommendedName>
    <alternativeName>
        <fullName evidence="2">50S ribosomal protein L18Ae</fullName>
    </alternativeName>
    <alternativeName>
        <fullName evidence="1">50S ribosomal protein L20e</fullName>
    </alternativeName>
    <alternativeName>
        <fullName evidence="1">50S ribosomal protein LX</fullName>
    </alternativeName>
</protein>